<feature type="chain" id="PRO_0000427753" description="Chloramphenicol efflux pump MT0201">
    <location>
        <begin position="1"/>
        <end position="413"/>
    </location>
</feature>
<feature type="transmembrane region" description="Helical" evidence="2">
    <location>
        <begin position="23"/>
        <end position="43"/>
    </location>
</feature>
<feature type="transmembrane region" description="Helical" evidence="2">
    <location>
        <begin position="55"/>
        <end position="75"/>
    </location>
</feature>
<feature type="transmembrane region" description="Helical" evidence="2">
    <location>
        <begin position="89"/>
        <end position="109"/>
    </location>
</feature>
<feature type="transmembrane region" description="Helical" evidence="2">
    <location>
        <begin position="110"/>
        <end position="130"/>
    </location>
</feature>
<feature type="transmembrane region" description="Helical" evidence="2">
    <location>
        <begin position="150"/>
        <end position="170"/>
    </location>
</feature>
<feature type="transmembrane region" description="Helical" evidence="2">
    <location>
        <begin position="176"/>
        <end position="196"/>
    </location>
</feature>
<feature type="transmembrane region" description="Helical" evidence="2">
    <location>
        <begin position="226"/>
        <end position="246"/>
    </location>
</feature>
<feature type="transmembrane region" description="Helical" evidence="2">
    <location>
        <begin position="256"/>
        <end position="276"/>
    </location>
</feature>
<feature type="transmembrane region" description="Helical" evidence="2">
    <location>
        <begin position="286"/>
        <end position="306"/>
    </location>
</feature>
<feature type="transmembrane region" description="Helical" evidence="2">
    <location>
        <begin position="312"/>
        <end position="332"/>
    </location>
</feature>
<feature type="transmembrane region" description="Helical" evidence="2">
    <location>
        <begin position="353"/>
        <end position="373"/>
    </location>
</feature>
<feature type="transmembrane region" description="Helical" evidence="2">
    <location>
        <begin position="378"/>
        <end position="398"/>
    </location>
</feature>
<sequence>MTAPTGTSATTTRPWTPRIATQLSVLACAAFIYVTAEILPVGALSAIARNLRVSVVLVGTLLSWYALVAAVTTVPLVRWTAHWPRRRALVVSLVCLTVSQLVSALAPNFAVLAAGRVLCAVTHGLLWAVIAPIATRLVPPSHAGRATTSIYIGTSLALVVGSPLTAAMSLMWGWRLAAVCVTGAAAAVALAARLALPEMVLRADQLEHVGRRARHPRNPRLVKVSVLTMIAVTGHFVSYTYIVVIIRDVVGVRGPNLAWLLAAYGVAGLVSVPLVARPLDRWPKGAVIVGMTGLTAAFTLLTALAFGERHTAATALLGTGAIVLWGALATAVSPMLQSAAMRSGGDDPDGASGLYVTAFQIGIMAGALLGGLLYERSLAMMLTASAGLMGVALFGMTVSQHLFENPTLSPGDG</sequence>
<protein>
    <recommendedName>
        <fullName evidence="1">Chloramphenicol efflux pump MT0201</fullName>
    </recommendedName>
</protein>
<keyword id="KW-0046">Antibiotic resistance</keyword>
<keyword id="KW-1003">Cell membrane</keyword>
<keyword id="KW-0472">Membrane</keyword>
<keyword id="KW-1185">Reference proteome</keyword>
<keyword id="KW-0812">Transmembrane</keyword>
<keyword id="KW-1133">Transmembrane helix</keyword>
<keyword id="KW-0813">Transport</keyword>
<name>CHLEP_MYCTO</name>
<organism>
    <name type="scientific">Mycobacterium tuberculosis (strain CDC 1551 / Oshkosh)</name>
    <dbReference type="NCBI Taxonomy" id="83331"/>
    <lineage>
        <taxon>Bacteria</taxon>
        <taxon>Bacillati</taxon>
        <taxon>Actinomycetota</taxon>
        <taxon>Actinomycetes</taxon>
        <taxon>Mycobacteriales</taxon>
        <taxon>Mycobacteriaceae</taxon>
        <taxon>Mycobacterium</taxon>
        <taxon>Mycobacterium tuberculosis complex</taxon>
    </lineage>
</organism>
<gene>
    <name type="ordered locus">MT0201</name>
</gene>
<proteinExistence type="inferred from homology"/>
<evidence type="ECO:0000250" key="1">
    <source>
        <dbReference type="UniProtKB" id="P9WJX7"/>
    </source>
</evidence>
<evidence type="ECO:0000255" key="2"/>
<evidence type="ECO:0000305" key="3"/>
<dbReference type="EMBL" id="AE000516">
    <property type="protein sequence ID" value="AAK44421.1"/>
    <property type="molecule type" value="Genomic_DNA"/>
</dbReference>
<dbReference type="PIR" id="B70907">
    <property type="entry name" value="B70907"/>
</dbReference>
<dbReference type="RefSeq" id="WP_010924196.1">
    <property type="nucleotide sequence ID" value="NC_002755.2"/>
</dbReference>
<dbReference type="SMR" id="P9WJX6"/>
<dbReference type="KEGG" id="mtc:MT0201"/>
<dbReference type="HOGENOM" id="CLU_001265_61_1_11"/>
<dbReference type="Proteomes" id="UP000001020">
    <property type="component" value="Chromosome"/>
</dbReference>
<dbReference type="GO" id="GO:0005886">
    <property type="term" value="C:plasma membrane"/>
    <property type="evidence" value="ECO:0007669"/>
    <property type="project" value="UniProtKB-SubCell"/>
</dbReference>
<dbReference type="GO" id="GO:0022857">
    <property type="term" value="F:transmembrane transporter activity"/>
    <property type="evidence" value="ECO:0007669"/>
    <property type="project" value="InterPro"/>
</dbReference>
<dbReference type="GO" id="GO:0046677">
    <property type="term" value="P:response to antibiotic"/>
    <property type="evidence" value="ECO:0007669"/>
    <property type="project" value="UniProtKB-KW"/>
</dbReference>
<dbReference type="CDD" id="cd17324">
    <property type="entry name" value="MFS_NepI_like"/>
    <property type="match status" value="1"/>
</dbReference>
<dbReference type="Gene3D" id="1.20.1250.20">
    <property type="entry name" value="MFS general substrate transporter like domains"/>
    <property type="match status" value="2"/>
</dbReference>
<dbReference type="InterPro" id="IPR011701">
    <property type="entry name" value="MFS"/>
</dbReference>
<dbReference type="InterPro" id="IPR020846">
    <property type="entry name" value="MFS_dom"/>
</dbReference>
<dbReference type="InterPro" id="IPR050189">
    <property type="entry name" value="MFS_Efflux_Transporters"/>
</dbReference>
<dbReference type="InterPro" id="IPR036259">
    <property type="entry name" value="MFS_trans_sf"/>
</dbReference>
<dbReference type="PANTHER" id="PTHR43124:SF3">
    <property type="entry name" value="CHLORAMPHENICOL EFFLUX PUMP RV0191"/>
    <property type="match status" value="1"/>
</dbReference>
<dbReference type="PANTHER" id="PTHR43124">
    <property type="entry name" value="PURINE EFFLUX PUMP PBUE"/>
    <property type="match status" value="1"/>
</dbReference>
<dbReference type="Pfam" id="PF07690">
    <property type="entry name" value="MFS_1"/>
    <property type="match status" value="1"/>
</dbReference>
<dbReference type="SUPFAM" id="SSF103473">
    <property type="entry name" value="MFS general substrate transporter"/>
    <property type="match status" value="1"/>
</dbReference>
<dbReference type="PROSITE" id="PS50850">
    <property type="entry name" value="MFS"/>
    <property type="match status" value="1"/>
</dbReference>
<comment type="function">
    <text evidence="1">Active efflux pump that plays an important role in chloramphenicol resistance.</text>
</comment>
<comment type="subcellular location">
    <subcellularLocation>
        <location evidence="1">Cell membrane</location>
        <topology evidence="2">Multi-pass membrane protein</topology>
    </subcellularLocation>
</comment>
<comment type="induction">
    <text evidence="1">Expression is negatively regulated by the transcriptional repressor MT1396.</text>
</comment>
<comment type="similarity">
    <text evidence="3">Belongs to the major facilitator superfamily.</text>
</comment>
<accession>P9WJX6</accession>
<accession>L0T4M5</accession>
<accession>O07435</accession>
<accession>Q7DAA8</accession>
<reference key="1">
    <citation type="journal article" date="2002" name="J. Bacteriol.">
        <title>Whole-genome comparison of Mycobacterium tuberculosis clinical and laboratory strains.</title>
        <authorList>
            <person name="Fleischmann R.D."/>
            <person name="Alland D."/>
            <person name="Eisen J.A."/>
            <person name="Carpenter L."/>
            <person name="White O."/>
            <person name="Peterson J.D."/>
            <person name="DeBoy R.T."/>
            <person name="Dodson R.J."/>
            <person name="Gwinn M.L."/>
            <person name="Haft D.H."/>
            <person name="Hickey E.K."/>
            <person name="Kolonay J.F."/>
            <person name="Nelson W.C."/>
            <person name="Umayam L.A."/>
            <person name="Ermolaeva M.D."/>
            <person name="Salzberg S.L."/>
            <person name="Delcher A."/>
            <person name="Utterback T.R."/>
            <person name="Weidman J.F."/>
            <person name="Khouri H.M."/>
            <person name="Gill J."/>
            <person name="Mikula A."/>
            <person name="Bishai W."/>
            <person name="Jacobs W.R. Jr."/>
            <person name="Venter J.C."/>
            <person name="Fraser C.M."/>
        </authorList>
    </citation>
    <scope>NUCLEOTIDE SEQUENCE [LARGE SCALE GENOMIC DNA]</scope>
    <source>
        <strain>CDC 1551 / Oshkosh</strain>
    </source>
</reference>